<organism>
    <name type="scientific">Mycobacterium tuberculosis (strain CDC 1551 / Oshkosh)</name>
    <dbReference type="NCBI Taxonomy" id="83331"/>
    <lineage>
        <taxon>Bacteria</taxon>
        <taxon>Bacillati</taxon>
        <taxon>Actinomycetota</taxon>
        <taxon>Actinomycetes</taxon>
        <taxon>Mycobacteriales</taxon>
        <taxon>Mycobacteriaceae</taxon>
        <taxon>Mycobacterium</taxon>
        <taxon>Mycobacterium tuberculosis complex</taxon>
    </lineage>
</organism>
<evidence type="ECO:0000255" key="1">
    <source>
        <dbReference type="PROSITE-ProRule" id="PRU00490"/>
    </source>
</evidence>
<evidence type="ECO:0000256" key="2">
    <source>
        <dbReference type="SAM" id="MobiDB-lite"/>
    </source>
</evidence>
<sequence length="374" mass="38269">MAAMRAHARRRHPHALMSRAAGLPRLSWFAGLTWFAGGSTGAGCAAHPALAGLTAGARCPAYAAISASTARPAATALPAVAASTARPAATAGTTPATGASGSARPTDAAGMADLARPGVVATHAVRTLGTTGSRAIGLCPSQPLDCPRSPQATLNLGSMGRSLDGPQWRRARVRLCGRWWRRSNTTRGASPRPPSTCRGDNVSMIELEVHQADVTKLELDAITNAANTRLRHAGGVAAAIARAGGPELQRESTEKAPIGLGEAVETTAGDMPARYVIHAATMELGGPTSGEIITAATAATLRKADELGCRSLALVAFGTGVGGFPLDDAARLMVGAVRRHRPGSLQRVVFAVHGDAAERAFSAAIQAGEDTARR</sequence>
<reference key="1">
    <citation type="journal article" date="2002" name="J. Bacteriol.">
        <title>Whole-genome comparison of Mycobacterium tuberculosis clinical and laboratory strains.</title>
        <authorList>
            <person name="Fleischmann R.D."/>
            <person name="Alland D."/>
            <person name="Eisen J.A."/>
            <person name="Carpenter L."/>
            <person name="White O."/>
            <person name="Peterson J.D."/>
            <person name="DeBoy R.T."/>
            <person name="Dodson R.J."/>
            <person name="Gwinn M.L."/>
            <person name="Haft D.H."/>
            <person name="Hickey E.K."/>
            <person name="Kolonay J.F."/>
            <person name="Nelson W.C."/>
            <person name="Umayam L.A."/>
            <person name="Ermolaeva M.D."/>
            <person name="Salzberg S.L."/>
            <person name="Delcher A."/>
            <person name="Utterback T.R."/>
            <person name="Weidman J.F."/>
            <person name="Khouri H.M."/>
            <person name="Gill J."/>
            <person name="Mikula A."/>
            <person name="Bishai W."/>
            <person name="Jacobs W.R. Jr."/>
            <person name="Venter J.C."/>
            <person name="Fraser C.M."/>
        </authorList>
    </citation>
    <scope>NUCLEOTIDE SEQUENCE [LARGE SCALE GENOMIC DNA]</scope>
    <source>
        <strain>CDC 1551 / Oshkosh</strain>
    </source>
</reference>
<protein>
    <recommendedName>
        <fullName>Uncharacterized protein MT1950</fullName>
    </recommendedName>
</protein>
<dbReference type="EMBL" id="AE000516">
    <property type="protein sequence ID" value="AAK46221.1"/>
    <property type="molecule type" value="Genomic_DNA"/>
</dbReference>
<dbReference type="PIR" id="H70517">
    <property type="entry name" value="H70517"/>
</dbReference>
<dbReference type="SMR" id="P9WK28"/>
<dbReference type="KEGG" id="mtc:MT1950"/>
<dbReference type="HOGENOM" id="CLU_862823_0_0_11"/>
<dbReference type="Proteomes" id="UP000001020">
    <property type="component" value="Chromosome"/>
</dbReference>
<dbReference type="Gene3D" id="3.40.220.10">
    <property type="entry name" value="Leucine Aminopeptidase, subunit E, domain 1"/>
    <property type="match status" value="1"/>
</dbReference>
<dbReference type="InterPro" id="IPR002589">
    <property type="entry name" value="Macro_dom"/>
</dbReference>
<dbReference type="InterPro" id="IPR043472">
    <property type="entry name" value="Macro_dom-like"/>
</dbReference>
<dbReference type="PANTHER" id="PTHR11106">
    <property type="entry name" value="GANGLIOSIDE INDUCED DIFFERENTIATION ASSOCIATED PROTEIN 2-RELATED"/>
    <property type="match status" value="1"/>
</dbReference>
<dbReference type="PANTHER" id="PTHR11106:SF111">
    <property type="entry name" value="MACRO DOMAIN-CONTAINING PROTEIN"/>
    <property type="match status" value="1"/>
</dbReference>
<dbReference type="Pfam" id="PF01661">
    <property type="entry name" value="Macro"/>
    <property type="match status" value="1"/>
</dbReference>
<dbReference type="SMART" id="SM00506">
    <property type="entry name" value="A1pp"/>
    <property type="match status" value="1"/>
</dbReference>
<dbReference type="SUPFAM" id="SSF52949">
    <property type="entry name" value="Macro domain-like"/>
    <property type="match status" value="1"/>
</dbReference>
<dbReference type="PROSITE" id="PS51154">
    <property type="entry name" value="MACRO"/>
    <property type="match status" value="1"/>
</dbReference>
<feature type="chain" id="PRO_0000427726" description="Uncharacterized protein MT1950">
    <location>
        <begin position="1"/>
        <end position="374"/>
    </location>
</feature>
<feature type="domain" description="Macro" evidence="1">
    <location>
        <begin position="179"/>
        <end position="354"/>
    </location>
</feature>
<feature type="region of interest" description="Disordered" evidence="2">
    <location>
        <begin position="86"/>
        <end position="109"/>
    </location>
</feature>
<feature type="compositionally biased region" description="Low complexity" evidence="2">
    <location>
        <begin position="86"/>
        <end position="104"/>
    </location>
</feature>
<accession>P9WK28</accession>
<accession>L0T9K7</accession>
<accession>O07733</accession>
<accession>Q8VJU7</accession>
<name>Y1899_MYCTO</name>
<proteinExistence type="predicted"/>
<gene>
    <name type="ordered locus">MT1950</name>
</gene>
<keyword id="KW-1185">Reference proteome</keyword>